<protein>
    <recommendedName>
        <fullName evidence="1">Membrane protein</fullName>
        <shortName evidence="1">M protein</shortName>
    </recommendedName>
    <alternativeName>
        <fullName evidence="1">E1 glycoprotein</fullName>
    </alternativeName>
    <alternativeName>
        <fullName evidence="1">Matrix glycoprotein</fullName>
    </alternativeName>
    <alternativeName>
        <fullName evidence="1">Membrane glycoprotein</fullName>
    </alternativeName>
</protein>
<dbReference type="EMBL" id="EF065505">
    <property type="protein sequence ID" value="ABN10845.1"/>
    <property type="molecule type" value="Genomic_RNA"/>
</dbReference>
<dbReference type="RefSeq" id="YP_001039959.1">
    <property type="nucleotide sequence ID" value="NC_009019.1"/>
</dbReference>
<dbReference type="SMR" id="A3EXA0"/>
<dbReference type="GeneID" id="4835996"/>
<dbReference type="KEGG" id="vg:4835996"/>
<dbReference type="OrthoDB" id="8130at10239"/>
<dbReference type="Proteomes" id="UP000006574">
    <property type="component" value="Genome"/>
</dbReference>
<dbReference type="GO" id="GO:0044178">
    <property type="term" value="C:host cell Golgi membrane"/>
    <property type="evidence" value="ECO:0007669"/>
    <property type="project" value="UniProtKB-SubCell"/>
</dbReference>
<dbReference type="GO" id="GO:0016020">
    <property type="term" value="C:membrane"/>
    <property type="evidence" value="ECO:0007669"/>
    <property type="project" value="UniProtKB-UniRule"/>
</dbReference>
<dbReference type="GO" id="GO:0019031">
    <property type="term" value="C:viral envelope"/>
    <property type="evidence" value="ECO:0007669"/>
    <property type="project" value="UniProtKB-UniRule"/>
</dbReference>
<dbReference type="GO" id="GO:0055036">
    <property type="term" value="C:virion membrane"/>
    <property type="evidence" value="ECO:0007669"/>
    <property type="project" value="UniProtKB-SubCell"/>
</dbReference>
<dbReference type="GO" id="GO:0039660">
    <property type="term" value="F:structural constituent of virion"/>
    <property type="evidence" value="ECO:0007669"/>
    <property type="project" value="UniProtKB-UniRule"/>
</dbReference>
<dbReference type="CDD" id="cd21567">
    <property type="entry name" value="MERS-like-CoV_M"/>
    <property type="match status" value="1"/>
</dbReference>
<dbReference type="HAMAP" id="MF_04202">
    <property type="entry name" value="BETA_CORONA_M"/>
    <property type="match status" value="1"/>
</dbReference>
<dbReference type="InterPro" id="IPR002574">
    <property type="entry name" value="M_CoV"/>
</dbReference>
<dbReference type="InterPro" id="IPR044363">
    <property type="entry name" value="M_MERS-like-CoV"/>
</dbReference>
<dbReference type="Pfam" id="PF01635">
    <property type="entry name" value="CoV_M"/>
    <property type="match status" value="1"/>
</dbReference>
<dbReference type="PROSITE" id="PS51927">
    <property type="entry name" value="COV_M"/>
    <property type="match status" value="1"/>
</dbReference>
<gene>
    <name evidence="1" type="primary">M</name>
    <name type="ORF">5</name>
</gene>
<keyword id="KW-0325">Glycoprotein</keyword>
<keyword id="KW-1040">Host Golgi apparatus</keyword>
<keyword id="KW-1043">Host membrane</keyword>
<keyword id="KW-0945">Host-virus interaction</keyword>
<keyword id="KW-0472">Membrane</keyword>
<keyword id="KW-1185">Reference proteome</keyword>
<keyword id="KW-0812">Transmembrane</keyword>
<keyword id="KW-1133">Transmembrane helix</keyword>
<keyword id="KW-0261">Viral envelope protein</keyword>
<keyword id="KW-0899">Viral immunoevasion</keyword>
<keyword id="KW-0468">Viral matrix protein</keyword>
<keyword id="KW-0946">Virion</keyword>
<proteinExistence type="inferred from homology"/>
<organism>
    <name type="scientific">Bat coronavirus HKU4</name>
    <name type="common">BtCoV</name>
    <name type="synonym">BtCoV/HKU4/2004</name>
    <dbReference type="NCBI Taxonomy" id="694007"/>
    <lineage>
        <taxon>Viruses</taxon>
        <taxon>Riboviria</taxon>
        <taxon>Orthornavirae</taxon>
        <taxon>Pisuviricota</taxon>
        <taxon>Pisoniviricetes</taxon>
        <taxon>Nidovirales</taxon>
        <taxon>Cornidovirineae</taxon>
        <taxon>Coronaviridae</taxon>
        <taxon>Orthocoronavirinae</taxon>
        <taxon>Betacoronavirus</taxon>
        <taxon>Merbecovirus</taxon>
    </lineage>
</organism>
<reference key="1">
    <citation type="journal article" date="2007" name="J. Virol.">
        <title>Comparative analysis of twelve genomes of three novel group 2c and group 2d coronaviruses reveals unique group and subgroup features.</title>
        <authorList>
            <person name="Woo P.C.Y."/>
            <person name="Wang M."/>
            <person name="Lau S.K.P."/>
            <person name="Xu H.F."/>
            <person name="Poon R.W.S."/>
            <person name="Guo R."/>
            <person name="Wong B.H.L."/>
            <person name="Gao K."/>
            <person name="Tsoi H.-W."/>
            <person name="Huang Y."/>
            <person name="Li K.S.M."/>
            <person name="Lam C.S.F."/>
            <person name="Chan K.-H."/>
            <person name="Zheng B.-J."/>
            <person name="Yuen K.-Y."/>
        </authorList>
    </citation>
    <scope>NUCLEOTIDE SEQUENCE [GENOMIC RNA]</scope>
    <source>
        <strain>Isolate HKU4-1</strain>
    </source>
</reference>
<organismHost>
    <name type="scientific">Tylonycteris pachypus</name>
    <name type="common">Lesser bamboo bat</name>
    <name type="synonym">Vespertilio pachypus</name>
    <dbReference type="NCBI Taxonomy" id="258959"/>
</organismHost>
<name>VME1_BCHK4</name>
<accession>A3EXA0</accession>
<comment type="function">
    <text evidence="1 2">Component of the viral envelope that plays a central role in virus morphogenesis and assembly via its interactions with other viral proteins.</text>
</comment>
<comment type="subunit">
    <text evidence="1 2">Homomultimer. Interacts with envelope E protein in the budding compartment of the host cell, which is located between endoplasmic reticulum and the Golgi complex. Forms a complex with HE and S proteins. Interacts with nucleocapsid N protein. This interaction probably participates in RNA packaging into the virus.</text>
</comment>
<comment type="subcellular location">
    <subcellularLocation>
        <location evidence="1">Virion membrane</location>
        <topology evidence="1">Multi-pass membrane protein</topology>
    </subcellularLocation>
    <subcellularLocation>
        <location evidence="1">Host Golgi apparatus membrane</location>
        <topology evidence="1">Multi-pass membrane protein</topology>
    </subcellularLocation>
    <text evidence="1">Largely embedded in the lipid bilayer.</text>
</comment>
<comment type="similarity">
    <text evidence="1">Belongs to the betacoronaviruses M protein family.</text>
</comment>
<sequence>MSSNGSLTKDEVVNIIKDWNFSWSIIFLLITIVLQYGYPSRSMMVYVFKMFILWLLWPASMALSIFSAIYPISLSSQIISGILAAICAVMWLAYFVQSIRLFMRTGSWWSFNPESNCLLNVPIGGTTVVRPLVEDSTSVTAVVNDGHLKMAGMHFGRCDYDRLPMEITVAKPSVLIALKMVKRQSYGTNSGVAIFHRYKAGNYRRPTIIQDEELALLRA</sequence>
<feature type="chain" id="PRO_0000290331" description="Membrane protein">
    <location>
        <begin position="1"/>
        <end position="219"/>
    </location>
</feature>
<feature type="topological domain" description="Virion surface" evidence="1">
    <location>
        <begin position="1"/>
        <end position="18"/>
    </location>
</feature>
<feature type="transmembrane region" description="Helical" evidence="1">
    <location>
        <begin position="19"/>
        <end position="39"/>
    </location>
</feature>
<feature type="topological domain" description="Intravirion" evidence="1">
    <location>
        <begin position="40"/>
        <end position="49"/>
    </location>
</feature>
<feature type="transmembrane region" description="Helical" evidence="1">
    <location>
        <begin position="50"/>
        <end position="70"/>
    </location>
</feature>
<feature type="topological domain" description="Virion surface" evidence="1">
    <location>
        <begin position="71"/>
        <end position="78"/>
    </location>
</feature>
<feature type="transmembrane region" description="Helical" evidence="1">
    <location>
        <begin position="79"/>
        <end position="99"/>
    </location>
</feature>
<feature type="topological domain" description="Intravirion" evidence="1">
    <location>
        <begin position="100"/>
        <end position="219"/>
    </location>
</feature>
<evidence type="ECO:0000255" key="1">
    <source>
        <dbReference type="HAMAP-Rule" id="MF_04202"/>
    </source>
</evidence>
<evidence type="ECO:0000255" key="2">
    <source>
        <dbReference type="PROSITE-ProRule" id="PRU01275"/>
    </source>
</evidence>